<name>SHE10_LACTC</name>
<evidence type="ECO:0000250" key="1">
    <source>
        <dbReference type="UniProtKB" id="P53075"/>
    </source>
</evidence>
<evidence type="ECO:0000255" key="2"/>
<evidence type="ECO:0000256" key="3">
    <source>
        <dbReference type="SAM" id="MobiDB-lite"/>
    </source>
</evidence>
<evidence type="ECO:0000305" key="4"/>
<dbReference type="EMBL" id="CU928171">
    <property type="protein sequence ID" value="CAR24654.1"/>
    <property type="molecule type" value="Genomic_DNA"/>
</dbReference>
<dbReference type="RefSeq" id="XP_002555091.1">
    <property type="nucleotide sequence ID" value="XM_002555045.1"/>
</dbReference>
<dbReference type="SMR" id="C5DLJ3"/>
<dbReference type="FunCoup" id="C5DLJ3">
    <property type="interactions" value="27"/>
</dbReference>
<dbReference type="STRING" id="559295.C5DLJ3"/>
<dbReference type="GeneID" id="8293349"/>
<dbReference type="KEGG" id="lth:KLTH0G01166g"/>
<dbReference type="eggNOG" id="ENOG502QT2T">
    <property type="taxonomic scope" value="Eukaryota"/>
</dbReference>
<dbReference type="HOGENOM" id="CLU_023952_1_0_1"/>
<dbReference type="InParanoid" id="C5DLJ3"/>
<dbReference type="OMA" id="DEFQAWS"/>
<dbReference type="OrthoDB" id="3260408at2759"/>
<dbReference type="Proteomes" id="UP000002036">
    <property type="component" value="Chromosome G"/>
</dbReference>
<dbReference type="GO" id="GO:0005739">
    <property type="term" value="C:mitochondrion"/>
    <property type="evidence" value="ECO:0007669"/>
    <property type="project" value="UniProtKB-SubCell"/>
</dbReference>
<dbReference type="GO" id="GO:1990904">
    <property type="term" value="C:ribonucleoprotein complex"/>
    <property type="evidence" value="ECO:0007669"/>
    <property type="project" value="UniProtKB-KW"/>
</dbReference>
<dbReference type="GO" id="GO:0030435">
    <property type="term" value="P:sporulation resulting in formation of a cellular spore"/>
    <property type="evidence" value="ECO:0007669"/>
    <property type="project" value="UniProtKB-KW"/>
</dbReference>
<comment type="function">
    <text evidence="1">Involved in spore wall assembly. May be a component of the mitochondrial RNase MRP (MtMRP), a ribonucleoprotein endoribonuclease involved in the cleaving RNA transcripts to generate primers for DNA replication in mitochondria.</text>
</comment>
<comment type="subunit">
    <text evidence="1">Component of the mitochondria-localized RNase mitochondrial RNA-processing (RNase MRP) composed of one single RNA encoded by the NME1 gene and at least 31 proteins. Absent in the nucleus-localized RNase MRP (NuMRP).</text>
</comment>
<comment type="subcellular location">
    <subcellularLocation>
        <location evidence="1">Mitochondrion</location>
    </subcellularLocation>
</comment>
<comment type="similarity">
    <text evidence="4">Belongs to the SHE10 family.</text>
</comment>
<protein>
    <recommendedName>
        <fullName evidence="1">Outer spore wall assembly protein SHE10</fullName>
    </recommendedName>
    <alternativeName>
        <fullName evidence="1">Sensitivity to high expression protein 10</fullName>
    </alternativeName>
</protein>
<accession>C5DLJ3</accession>
<proteinExistence type="inferred from homology"/>
<organism>
    <name type="scientific">Lachancea thermotolerans (strain ATCC 56472 / CBS 6340 / NRRL Y-8284)</name>
    <name type="common">Yeast</name>
    <name type="synonym">Kluyveromyces thermotolerans</name>
    <dbReference type="NCBI Taxonomy" id="559295"/>
    <lineage>
        <taxon>Eukaryota</taxon>
        <taxon>Fungi</taxon>
        <taxon>Dikarya</taxon>
        <taxon>Ascomycota</taxon>
        <taxon>Saccharomycotina</taxon>
        <taxon>Saccharomycetes</taxon>
        <taxon>Saccharomycetales</taxon>
        <taxon>Saccharomycetaceae</taxon>
        <taxon>Lachancea</taxon>
    </lineage>
</organism>
<gene>
    <name evidence="1" type="primary">SHE10</name>
    <name type="ordered locus">KLTH0G01166g</name>
</gene>
<reference key="1">
    <citation type="journal article" date="2009" name="Genome Res.">
        <title>Comparative genomics of protoploid Saccharomycetaceae.</title>
        <authorList>
            <consortium name="The Genolevures Consortium"/>
            <person name="Souciet J.-L."/>
            <person name="Dujon B."/>
            <person name="Gaillardin C."/>
            <person name="Johnston M."/>
            <person name="Baret P.V."/>
            <person name="Cliften P."/>
            <person name="Sherman D.J."/>
            <person name="Weissenbach J."/>
            <person name="Westhof E."/>
            <person name="Wincker P."/>
            <person name="Jubin C."/>
            <person name="Poulain J."/>
            <person name="Barbe V."/>
            <person name="Segurens B."/>
            <person name="Artiguenave F."/>
            <person name="Anthouard V."/>
            <person name="Vacherie B."/>
            <person name="Val M.-E."/>
            <person name="Fulton R.S."/>
            <person name="Minx P."/>
            <person name="Wilson R."/>
            <person name="Durrens P."/>
            <person name="Jean G."/>
            <person name="Marck C."/>
            <person name="Martin T."/>
            <person name="Nikolski M."/>
            <person name="Rolland T."/>
            <person name="Seret M.-L."/>
            <person name="Casaregola S."/>
            <person name="Despons L."/>
            <person name="Fairhead C."/>
            <person name="Fischer G."/>
            <person name="Lafontaine I."/>
            <person name="Leh V."/>
            <person name="Lemaire M."/>
            <person name="de Montigny J."/>
            <person name="Neuveglise C."/>
            <person name="Thierry A."/>
            <person name="Blanc-Lenfle I."/>
            <person name="Bleykasten C."/>
            <person name="Diffels J."/>
            <person name="Fritsch E."/>
            <person name="Frangeul L."/>
            <person name="Goeffon A."/>
            <person name="Jauniaux N."/>
            <person name="Kachouri-Lafond R."/>
            <person name="Payen C."/>
            <person name="Potier S."/>
            <person name="Pribylova L."/>
            <person name="Ozanne C."/>
            <person name="Richard G.-F."/>
            <person name="Sacerdot C."/>
            <person name="Straub M.-L."/>
            <person name="Talla E."/>
        </authorList>
    </citation>
    <scope>NUCLEOTIDE SEQUENCE [LARGE SCALE GENOMIC DNA]</scope>
    <source>
        <strain>ATCC 56472 / CBS 6340 / NRRL Y-8284</strain>
    </source>
</reference>
<keyword id="KW-0175">Coiled coil</keyword>
<keyword id="KW-0496">Mitochondrion</keyword>
<keyword id="KW-1185">Reference proteome</keyword>
<keyword id="KW-0687">Ribonucleoprotein</keyword>
<keyword id="KW-0732">Signal</keyword>
<keyword id="KW-0749">Sporulation</keyword>
<feature type="signal peptide" evidence="2">
    <location>
        <begin position="1"/>
        <end position="24"/>
    </location>
</feature>
<feature type="chain" id="PRO_0000408909" description="Outer spore wall assembly protein SHE10">
    <location>
        <begin position="25"/>
        <end position="673"/>
    </location>
</feature>
<feature type="region of interest" description="Disordered" evidence="3">
    <location>
        <begin position="530"/>
        <end position="551"/>
    </location>
</feature>
<feature type="region of interest" description="Disordered" evidence="3">
    <location>
        <begin position="587"/>
        <end position="673"/>
    </location>
</feature>
<feature type="coiled-coil region" evidence="2">
    <location>
        <begin position="503"/>
        <end position="568"/>
    </location>
</feature>
<feature type="coiled-coil region" evidence="2">
    <location>
        <begin position="617"/>
        <end position="647"/>
    </location>
</feature>
<feature type="compositionally biased region" description="Acidic residues" evidence="3">
    <location>
        <begin position="593"/>
        <end position="605"/>
    </location>
</feature>
<feature type="compositionally biased region" description="Acidic residues" evidence="3">
    <location>
        <begin position="612"/>
        <end position="629"/>
    </location>
</feature>
<feature type="compositionally biased region" description="Basic and acidic residues" evidence="3">
    <location>
        <begin position="630"/>
        <end position="673"/>
    </location>
</feature>
<sequence length="673" mass="78644">MRRVRGVGNLLVTILVVLIGFKQARKYCESNEAEFCRLTSLSRASPWWNEHIDPYWDSYVSPCVTKIHDYEHKLDEWAAPRIDRAYYQVQDIVETKVVPVTYKWYKTVQFKTQVYYNGHFVPFLGHARILAKQWLASEGFFQRLYLHVQQGLFCLRNWSLWVWNGSLEAFNEIHSWSGHALQEISNKFSVTENQSGEPVTDEDPSDTDESKYYDAEYFEGEQGDYNEDDETVYLTSTIIETVTLSDEKQLDKSTSAANGDDGSSLDVPLRDLVQDEFQAWSNTVEQKASNTLTQFDSEVEELVEAKLSKAQPNITGLLQGISESFQSHYRIINRAILDVDCTMELDPETGEQLYFNKDGTQLRKYVTRPLMREFFSSAHAHVDERLEMVRARLEKFVAAVNKEVEQVRQEHLEVYEEWGDVMVSEWSKRMAYVDVVAAMGAEDMNQQQHDNWKRFLKLKKQVVNTRDLLMQHPAKLERLQKFLNDIQFTLMALQRDAGEYLFILRSQANIAFQTREKLEREREEEERRKLEQERQIQEQKEREQQELAENEARAARERLALEQGQGQEQLEQNSDEAFFSMEDITATPLGADDNTDYENALDDADSQLSESGDSEDNFYDSYEGDEEDASRELERLERESAERETLDRLELGQRQKLQEEQHRDELHHSSQAN</sequence>